<protein>
    <recommendedName>
        <fullName>Signal transducer and activator of transcription 5B</fullName>
    </recommendedName>
</protein>
<feature type="chain" id="PRO_0000182430" description="Signal transducer and activator of transcription 5B">
    <location>
        <begin position="1"/>
        <end position="786"/>
    </location>
</feature>
<feature type="domain" description="SH2" evidence="3">
    <location>
        <begin position="589"/>
        <end position="686"/>
    </location>
</feature>
<feature type="modified residue" description="Phosphotyrosine" evidence="2">
    <location>
        <position position="90"/>
    </location>
</feature>
<feature type="modified residue" description="Phosphoserine" evidence="2">
    <location>
        <position position="128"/>
    </location>
</feature>
<feature type="modified residue" description="Phosphotyrosine" evidence="1">
    <location>
        <position position="682"/>
    </location>
</feature>
<feature type="modified residue" description="Phosphotyrosine" evidence="13">
    <location>
        <position position="699"/>
    </location>
</feature>
<feature type="sequence variant" description="In strain: NOD; reduces DNA-binding affinity." evidence="5">
    <original>L</original>
    <variation>M</variation>
    <location>
        <position position="327"/>
    </location>
</feature>
<feature type="mutagenesis site" description="Fails to interact with INSR." evidence="10">
    <original>T</original>
    <variation>A</variation>
    <location>
        <position position="684"/>
    </location>
</feature>
<feature type="sequence conflict" description="In Ref. 8; CAB51862." evidence="12" ref="8">
    <original>S</original>
    <variation>P</variation>
    <location>
        <position position="210"/>
    </location>
</feature>
<feature type="sequence conflict" description="In Ref. 2; AAC52282 and 4; AAL05590/AAK97791/AAK97792/AAK97793." evidence="12" ref="2 4">
    <original>E</original>
    <variation>G</variation>
    <location>
        <position position="433"/>
    </location>
</feature>
<proteinExistence type="evidence at protein level"/>
<dbReference type="EMBL" id="Z48539">
    <property type="protein sequence ID" value="CAA88420.1"/>
    <property type="molecule type" value="mRNA"/>
</dbReference>
<dbReference type="EMBL" id="U21110">
    <property type="protein sequence ID" value="AAC52282.1"/>
    <property type="molecule type" value="mRNA"/>
</dbReference>
<dbReference type="EMBL" id="AF234171">
    <property type="protein sequence ID" value="AAF62911.2"/>
    <property type="molecule type" value="Genomic_DNA"/>
</dbReference>
<dbReference type="EMBL" id="AY040231">
    <property type="protein sequence ID" value="AAK74074.1"/>
    <property type="molecule type" value="mRNA"/>
</dbReference>
<dbReference type="EMBL" id="AY042906">
    <property type="protein sequence ID" value="AAL05590.1"/>
    <property type="molecule type" value="mRNA"/>
</dbReference>
<dbReference type="EMBL" id="AY044901">
    <property type="protein sequence ID" value="AAK97791.1"/>
    <property type="molecule type" value="mRNA"/>
</dbReference>
<dbReference type="EMBL" id="AY044902">
    <property type="protein sequence ID" value="AAK97792.1"/>
    <property type="molecule type" value="mRNA"/>
</dbReference>
<dbReference type="EMBL" id="AY044903">
    <property type="protein sequence ID" value="AAK97793.1"/>
    <property type="molecule type" value="mRNA"/>
</dbReference>
<dbReference type="EMBL" id="AK150098">
    <property type="protein sequence ID" value="BAE29305.1"/>
    <property type="molecule type" value="mRNA"/>
</dbReference>
<dbReference type="EMBL" id="AK154014">
    <property type="protein sequence ID" value="BAE32317.1"/>
    <property type="molecule type" value="mRNA"/>
</dbReference>
<dbReference type="EMBL" id="AK154664">
    <property type="protein sequence ID" value="BAE32752.1"/>
    <property type="molecule type" value="mRNA"/>
</dbReference>
<dbReference type="EMBL" id="AL591466">
    <property type="status" value="NOT_ANNOTATED_CDS"/>
    <property type="molecule type" value="Genomic_DNA"/>
</dbReference>
<dbReference type="EMBL" id="BC024319">
    <property type="protein sequence ID" value="AAH24319.1"/>
    <property type="molecule type" value="mRNA"/>
</dbReference>
<dbReference type="EMBL" id="AJ237939">
    <property type="protein sequence ID" value="CAB51862.1"/>
    <property type="molecule type" value="Genomic_DNA"/>
</dbReference>
<dbReference type="CCDS" id="CCDS25438.1"/>
<dbReference type="PIR" id="I49274">
    <property type="entry name" value="I49274"/>
</dbReference>
<dbReference type="RefSeq" id="NP_001107035.1">
    <property type="nucleotide sequence ID" value="NM_001113563.2"/>
</dbReference>
<dbReference type="RefSeq" id="NP_001349611.1">
    <property type="nucleotide sequence ID" value="NM_001362682.1"/>
</dbReference>
<dbReference type="RefSeq" id="NP_035619.3">
    <property type="nucleotide sequence ID" value="NM_011489.3"/>
</dbReference>
<dbReference type="RefSeq" id="XP_017169892.1">
    <property type="nucleotide sequence ID" value="XM_017314403.1"/>
</dbReference>
<dbReference type="SMR" id="P42232"/>
<dbReference type="BioGRID" id="203526">
    <property type="interactions" value="6"/>
</dbReference>
<dbReference type="CORUM" id="P42232"/>
<dbReference type="DIP" id="DIP-898N"/>
<dbReference type="FunCoup" id="P42232">
    <property type="interactions" value="4246"/>
</dbReference>
<dbReference type="IntAct" id="P42232">
    <property type="interactions" value="5"/>
</dbReference>
<dbReference type="MINT" id="P42232"/>
<dbReference type="STRING" id="10090.ENSMUSP00000102981"/>
<dbReference type="BindingDB" id="P42232"/>
<dbReference type="ChEMBL" id="CHEMBL4523225"/>
<dbReference type="GlyConnect" id="2715">
    <property type="glycosylation" value="1 N-Linked glycan (1 site)"/>
</dbReference>
<dbReference type="GlyCosmos" id="P42232">
    <property type="glycosylation" value="1 site, 1 glycan"/>
</dbReference>
<dbReference type="GlyGen" id="P42232">
    <property type="glycosylation" value="3 sites, 2 N-linked glycans (2 sites), 1 O-linked glycan (1 site)"/>
</dbReference>
<dbReference type="iPTMnet" id="P42232"/>
<dbReference type="PhosphoSitePlus" id="P42232"/>
<dbReference type="SwissPalm" id="P42232"/>
<dbReference type="jPOST" id="P42232"/>
<dbReference type="PaxDb" id="10090-ENSMUSP00000102981"/>
<dbReference type="PeptideAtlas" id="P42232"/>
<dbReference type="ProteomicsDB" id="258652"/>
<dbReference type="Pumba" id="P42232"/>
<dbReference type="Antibodypedia" id="3804">
    <property type="antibodies" value="951 antibodies from 44 providers"/>
</dbReference>
<dbReference type="DNASU" id="20851"/>
<dbReference type="Ensembl" id="ENSMUST00000004143.3">
    <property type="protein sequence ID" value="ENSMUSP00000004143.3"/>
    <property type="gene ID" value="ENSMUSG00000020919.12"/>
</dbReference>
<dbReference type="Ensembl" id="ENSMUST00000107358.9">
    <property type="protein sequence ID" value="ENSMUSP00000102981.3"/>
    <property type="gene ID" value="ENSMUSG00000020919.12"/>
</dbReference>
<dbReference type="GeneID" id="20851"/>
<dbReference type="KEGG" id="mmu:20851"/>
<dbReference type="UCSC" id="uc007lmi.2">
    <property type="organism name" value="mouse"/>
</dbReference>
<dbReference type="AGR" id="MGI:103035"/>
<dbReference type="CTD" id="6777"/>
<dbReference type="MGI" id="MGI:103035">
    <property type="gene designation" value="Stat5b"/>
</dbReference>
<dbReference type="VEuPathDB" id="HostDB:ENSMUSG00000020919"/>
<dbReference type="eggNOG" id="KOG3667">
    <property type="taxonomic scope" value="Eukaryota"/>
</dbReference>
<dbReference type="GeneTree" id="ENSGT01080000257420"/>
<dbReference type="HOGENOM" id="CLU_014189_2_2_1"/>
<dbReference type="InParanoid" id="P42232"/>
<dbReference type="OMA" id="WIEEKMW"/>
<dbReference type="OrthoDB" id="19300at2759"/>
<dbReference type="PhylomeDB" id="P42232"/>
<dbReference type="TreeFam" id="TF318648"/>
<dbReference type="Reactome" id="R-MMU-1266695">
    <property type="pathway name" value="Interleukin-7 signaling"/>
</dbReference>
<dbReference type="Reactome" id="R-MMU-1433557">
    <property type="pathway name" value="Signaling by SCF-KIT"/>
</dbReference>
<dbReference type="Reactome" id="R-MMU-186763">
    <property type="pathway name" value="Downstream signal transduction"/>
</dbReference>
<dbReference type="Reactome" id="R-MMU-512988">
    <property type="pathway name" value="Interleukin-3, Interleukin-5 and GM-CSF signaling"/>
</dbReference>
<dbReference type="Reactome" id="R-MMU-8854691">
    <property type="pathway name" value="Interleukin-20 family signaling"/>
</dbReference>
<dbReference type="Reactome" id="R-MMU-8983432">
    <property type="pathway name" value="Interleukin-15 signaling"/>
</dbReference>
<dbReference type="Reactome" id="R-MMU-8985947">
    <property type="pathway name" value="Interleukin-9 signaling"/>
</dbReference>
<dbReference type="Reactome" id="R-MMU-9020558">
    <property type="pathway name" value="Interleukin-2 signaling"/>
</dbReference>
<dbReference type="Reactome" id="R-MMU-9020958">
    <property type="pathway name" value="Interleukin-21 signaling"/>
</dbReference>
<dbReference type="Reactome" id="R-MMU-982772">
    <property type="pathway name" value="Growth hormone receptor signaling"/>
</dbReference>
<dbReference type="BioGRID-ORCS" id="20851">
    <property type="hits" value="7 hits in 88 CRISPR screens"/>
</dbReference>
<dbReference type="ChiTaRS" id="Stat5b">
    <property type="organism name" value="mouse"/>
</dbReference>
<dbReference type="PRO" id="PR:P42232"/>
<dbReference type="Proteomes" id="UP000000589">
    <property type="component" value="Chromosome 11"/>
</dbReference>
<dbReference type="RNAct" id="P42232">
    <property type="molecule type" value="protein"/>
</dbReference>
<dbReference type="Bgee" id="ENSMUSG00000020919">
    <property type="expression patterns" value="Expressed in gastrocnemius medialis and 243 other cell types or tissues"/>
</dbReference>
<dbReference type="GO" id="GO:0005737">
    <property type="term" value="C:cytoplasm"/>
    <property type="evidence" value="ECO:0000314"/>
    <property type="project" value="UniProtKB"/>
</dbReference>
<dbReference type="GO" id="GO:0005829">
    <property type="term" value="C:cytosol"/>
    <property type="evidence" value="ECO:0000304"/>
    <property type="project" value="Reactome"/>
</dbReference>
<dbReference type="GO" id="GO:0005654">
    <property type="term" value="C:nucleoplasm"/>
    <property type="evidence" value="ECO:0000304"/>
    <property type="project" value="Reactome"/>
</dbReference>
<dbReference type="GO" id="GO:0005634">
    <property type="term" value="C:nucleus"/>
    <property type="evidence" value="ECO:0000314"/>
    <property type="project" value="UniProtKB"/>
</dbReference>
<dbReference type="GO" id="GO:0003682">
    <property type="term" value="F:chromatin binding"/>
    <property type="evidence" value="ECO:0000250"/>
    <property type="project" value="UniProtKB"/>
</dbReference>
<dbReference type="GO" id="GO:0003677">
    <property type="term" value="F:DNA binding"/>
    <property type="evidence" value="ECO:0000314"/>
    <property type="project" value="MGI"/>
</dbReference>
<dbReference type="GO" id="GO:0001228">
    <property type="term" value="F:DNA-binding transcription activator activity, RNA polymerase II-specific"/>
    <property type="evidence" value="ECO:0000314"/>
    <property type="project" value="NTNU_SB"/>
</dbReference>
<dbReference type="GO" id="GO:0035259">
    <property type="term" value="F:nuclear glucocorticoid receptor binding"/>
    <property type="evidence" value="ECO:0007669"/>
    <property type="project" value="Ensembl"/>
</dbReference>
<dbReference type="GO" id="GO:0046983">
    <property type="term" value="F:protein dimerization activity"/>
    <property type="evidence" value="ECO:0000314"/>
    <property type="project" value="UniProtKB"/>
</dbReference>
<dbReference type="GO" id="GO:0042803">
    <property type="term" value="F:protein homodimerization activity"/>
    <property type="evidence" value="ECO:0000250"/>
    <property type="project" value="UniProtKB"/>
</dbReference>
<dbReference type="GO" id="GO:0000978">
    <property type="term" value="F:RNA polymerase II cis-regulatory region sequence-specific DNA binding"/>
    <property type="evidence" value="ECO:0000314"/>
    <property type="project" value="MGI"/>
</dbReference>
<dbReference type="GO" id="GO:0050798">
    <property type="term" value="P:activated T cell proliferation"/>
    <property type="evidence" value="ECO:0000315"/>
    <property type="project" value="MGI"/>
</dbReference>
<dbReference type="GO" id="GO:0030183">
    <property type="term" value="P:B cell differentiation"/>
    <property type="evidence" value="ECO:0000316"/>
    <property type="project" value="MGI"/>
</dbReference>
<dbReference type="GO" id="GO:0008283">
    <property type="term" value="P:cell population proliferation"/>
    <property type="evidence" value="ECO:0000316"/>
    <property type="project" value="MGI"/>
</dbReference>
<dbReference type="GO" id="GO:0007259">
    <property type="term" value="P:cell surface receptor signaling pathway via JAK-STAT"/>
    <property type="evidence" value="ECO:0000314"/>
    <property type="project" value="MGI"/>
</dbReference>
<dbReference type="GO" id="GO:0071364">
    <property type="term" value="P:cellular response to epidermal growth factor stimulus"/>
    <property type="evidence" value="ECO:0000250"/>
    <property type="project" value="UniProtKB"/>
</dbReference>
<dbReference type="GO" id="GO:0071363">
    <property type="term" value="P:cellular response to growth factor stimulus"/>
    <property type="evidence" value="ECO:0000314"/>
    <property type="project" value="UniProtKB"/>
</dbReference>
<dbReference type="GO" id="GO:0019221">
    <property type="term" value="P:cytokine-mediated signaling pathway"/>
    <property type="evidence" value="ECO:0000314"/>
    <property type="project" value="MGI"/>
</dbReference>
<dbReference type="GO" id="GO:0046543">
    <property type="term" value="P:development of secondary female sexual characteristics"/>
    <property type="evidence" value="ECO:0000315"/>
    <property type="project" value="MGI"/>
</dbReference>
<dbReference type="GO" id="GO:0046544">
    <property type="term" value="P:development of secondary male sexual characteristics"/>
    <property type="evidence" value="ECO:0000315"/>
    <property type="project" value="MGI"/>
</dbReference>
<dbReference type="GO" id="GO:0030218">
    <property type="term" value="P:erythrocyte differentiation"/>
    <property type="evidence" value="ECO:0000316"/>
    <property type="project" value="MGI"/>
</dbReference>
<dbReference type="GO" id="GO:0038162">
    <property type="term" value="P:erythropoietin-mediated signaling pathway"/>
    <property type="evidence" value="ECO:0007669"/>
    <property type="project" value="Ensembl"/>
</dbReference>
<dbReference type="GO" id="GO:0007565">
    <property type="term" value="P:female pregnancy"/>
    <property type="evidence" value="ECO:0000315"/>
    <property type="project" value="MGI"/>
</dbReference>
<dbReference type="GO" id="GO:0042492">
    <property type="term" value="P:gamma-delta T cell differentiation"/>
    <property type="evidence" value="ECO:0000316"/>
    <property type="project" value="MGI"/>
</dbReference>
<dbReference type="GO" id="GO:0060397">
    <property type="term" value="P:growth hormone receptor signaling pathway via JAK-STAT"/>
    <property type="evidence" value="ECO:0000314"/>
    <property type="project" value="BHF-UCL"/>
</dbReference>
<dbReference type="GO" id="GO:0007595">
    <property type="term" value="P:lactation"/>
    <property type="evidence" value="ECO:0000315"/>
    <property type="project" value="MGI"/>
</dbReference>
<dbReference type="GO" id="GO:0019915">
    <property type="term" value="P:lipid storage"/>
    <property type="evidence" value="ECO:0000316"/>
    <property type="project" value="MGI"/>
</dbReference>
<dbReference type="GO" id="GO:0001553">
    <property type="term" value="P:luteinization"/>
    <property type="evidence" value="ECO:0000316"/>
    <property type="project" value="MGI"/>
</dbReference>
<dbReference type="GO" id="GO:0030098">
    <property type="term" value="P:lymphocyte differentiation"/>
    <property type="evidence" value="ECO:0000316"/>
    <property type="project" value="MGI"/>
</dbReference>
<dbReference type="GO" id="GO:0097531">
    <property type="term" value="P:mast cell migration"/>
    <property type="evidence" value="ECO:0000315"/>
    <property type="project" value="MGI"/>
</dbReference>
<dbReference type="GO" id="GO:0000278">
    <property type="term" value="P:mitotic cell cycle"/>
    <property type="evidence" value="ECO:0000316"/>
    <property type="project" value="MGI"/>
</dbReference>
<dbReference type="GO" id="GO:0033028">
    <property type="term" value="P:myeloid cell apoptotic process"/>
    <property type="evidence" value="ECO:0000316"/>
    <property type="project" value="MGI"/>
</dbReference>
<dbReference type="GO" id="GO:0001779">
    <property type="term" value="P:natural killer cell differentiation"/>
    <property type="evidence" value="ECO:0000315"/>
    <property type="project" value="MGI"/>
</dbReference>
<dbReference type="GO" id="GO:0042267">
    <property type="term" value="P:natural killer cell mediated cytotoxicity"/>
    <property type="evidence" value="ECO:0000315"/>
    <property type="project" value="MGI"/>
</dbReference>
<dbReference type="GO" id="GO:0001787">
    <property type="term" value="P:natural killer cell proliferation"/>
    <property type="evidence" value="ECO:0000315"/>
    <property type="project" value="MGI"/>
</dbReference>
<dbReference type="GO" id="GO:0045647">
    <property type="term" value="P:negative regulation of erythrocyte differentiation"/>
    <property type="evidence" value="ECO:0000316"/>
    <property type="project" value="MGI"/>
</dbReference>
<dbReference type="GO" id="GO:0033033">
    <property type="term" value="P:negative regulation of myeloid cell apoptotic process"/>
    <property type="evidence" value="ECO:0000316"/>
    <property type="project" value="MGI"/>
</dbReference>
<dbReference type="GO" id="GO:0048541">
    <property type="term" value="P:Peyer's patch development"/>
    <property type="evidence" value="ECO:0000316"/>
    <property type="project" value="MGI"/>
</dbReference>
<dbReference type="GO" id="GO:0042104">
    <property type="term" value="P:positive regulation of activated T cell proliferation"/>
    <property type="evidence" value="ECO:0000315"/>
    <property type="project" value="MGI"/>
</dbReference>
<dbReference type="GO" id="GO:0045579">
    <property type="term" value="P:positive regulation of B cell differentiation"/>
    <property type="evidence" value="ECO:0000316"/>
    <property type="project" value="MGI"/>
</dbReference>
<dbReference type="GO" id="GO:0008284">
    <property type="term" value="P:positive regulation of cell population proliferation"/>
    <property type="evidence" value="ECO:0000316"/>
    <property type="project" value="MGI"/>
</dbReference>
<dbReference type="GO" id="GO:0045648">
    <property type="term" value="P:positive regulation of erythrocyte differentiation"/>
    <property type="evidence" value="ECO:0000250"/>
    <property type="project" value="UniProtKB"/>
</dbReference>
<dbReference type="GO" id="GO:0045588">
    <property type="term" value="P:positive regulation of gamma-delta T cell differentiation"/>
    <property type="evidence" value="ECO:0000316"/>
    <property type="project" value="MGI"/>
</dbReference>
<dbReference type="GO" id="GO:0050729">
    <property type="term" value="P:positive regulation of inflammatory response"/>
    <property type="evidence" value="ECO:0000316"/>
    <property type="project" value="MGI"/>
</dbReference>
<dbReference type="GO" id="GO:0032743">
    <property type="term" value="P:positive regulation of interleukin-2 production"/>
    <property type="evidence" value="ECO:0000316"/>
    <property type="project" value="MGI"/>
</dbReference>
<dbReference type="GO" id="GO:0045621">
    <property type="term" value="P:positive regulation of lymphocyte differentiation"/>
    <property type="evidence" value="ECO:0000316"/>
    <property type="project" value="MGI"/>
</dbReference>
<dbReference type="GO" id="GO:0045931">
    <property type="term" value="P:positive regulation of mitotic cell cycle"/>
    <property type="evidence" value="ECO:0000316"/>
    <property type="project" value="MGI"/>
</dbReference>
<dbReference type="GO" id="GO:0040018">
    <property type="term" value="P:positive regulation of multicellular organism growth"/>
    <property type="evidence" value="ECO:0000315"/>
    <property type="project" value="MGI"/>
</dbReference>
<dbReference type="GO" id="GO:0032825">
    <property type="term" value="P:positive regulation of natural killer cell differentiation"/>
    <property type="evidence" value="ECO:0000315"/>
    <property type="project" value="MGI"/>
</dbReference>
<dbReference type="GO" id="GO:0045954">
    <property type="term" value="P:positive regulation of natural killer cell mediated cytotoxicity"/>
    <property type="evidence" value="ECO:0000315"/>
    <property type="project" value="MGI"/>
</dbReference>
<dbReference type="GO" id="GO:0032819">
    <property type="term" value="P:positive regulation of natural killer cell proliferation"/>
    <property type="evidence" value="ECO:0000315"/>
    <property type="project" value="MGI"/>
</dbReference>
<dbReference type="GO" id="GO:0045944">
    <property type="term" value="P:positive regulation of transcription by RNA polymerase II"/>
    <property type="evidence" value="ECO:0000314"/>
    <property type="project" value="UniProtKB"/>
</dbReference>
<dbReference type="GO" id="GO:0042448">
    <property type="term" value="P:progesterone metabolic process"/>
    <property type="evidence" value="ECO:0000316"/>
    <property type="project" value="MGI"/>
</dbReference>
<dbReference type="GO" id="GO:0030155">
    <property type="term" value="P:regulation of cell adhesion"/>
    <property type="evidence" value="ECO:0000315"/>
    <property type="project" value="MGI"/>
</dbReference>
<dbReference type="GO" id="GO:0030856">
    <property type="term" value="P:regulation of epithelial cell differentiation"/>
    <property type="evidence" value="ECO:0000315"/>
    <property type="project" value="MGI"/>
</dbReference>
<dbReference type="GO" id="GO:0040014">
    <property type="term" value="P:regulation of multicellular organism growth"/>
    <property type="evidence" value="ECO:0000316"/>
    <property type="project" value="BHF-UCL"/>
</dbReference>
<dbReference type="GO" id="GO:0019218">
    <property type="term" value="P:regulation of steroid metabolic process"/>
    <property type="evidence" value="ECO:0000316"/>
    <property type="project" value="MGI"/>
</dbReference>
<dbReference type="GO" id="GO:0006357">
    <property type="term" value="P:regulation of transcription by RNA polymerase II"/>
    <property type="evidence" value="ECO:0000316"/>
    <property type="project" value="MGI"/>
</dbReference>
<dbReference type="GO" id="GO:0032355">
    <property type="term" value="P:response to estradiol"/>
    <property type="evidence" value="ECO:0007669"/>
    <property type="project" value="Ensembl"/>
</dbReference>
<dbReference type="GO" id="GO:0070672">
    <property type="term" value="P:response to interleukin-15"/>
    <property type="evidence" value="ECO:0000315"/>
    <property type="project" value="MGI"/>
</dbReference>
<dbReference type="GO" id="GO:0070669">
    <property type="term" value="P:response to interleukin-2"/>
    <property type="evidence" value="ECO:0000315"/>
    <property type="project" value="MGI"/>
</dbReference>
<dbReference type="GO" id="GO:0070670">
    <property type="term" value="P:response to interleukin-4"/>
    <property type="evidence" value="ECO:0000315"/>
    <property type="project" value="MGI"/>
</dbReference>
<dbReference type="GO" id="GO:0007548">
    <property type="term" value="P:sex differentiation"/>
    <property type="evidence" value="ECO:0000315"/>
    <property type="project" value="MGI"/>
</dbReference>
<dbReference type="GO" id="GO:0033077">
    <property type="term" value="P:T cell differentiation in thymus"/>
    <property type="evidence" value="ECO:0000316"/>
    <property type="project" value="MGI"/>
</dbReference>
<dbReference type="GO" id="GO:0043029">
    <property type="term" value="P:T cell homeostasis"/>
    <property type="evidence" value="ECO:0000316"/>
    <property type="project" value="MGI"/>
</dbReference>
<dbReference type="GO" id="GO:0019530">
    <property type="term" value="P:taurine metabolic process"/>
    <property type="evidence" value="ECO:0000316"/>
    <property type="project" value="BHF-UCL"/>
</dbReference>
<dbReference type="GO" id="GO:0006366">
    <property type="term" value="P:transcription by RNA polymerase II"/>
    <property type="evidence" value="ECO:0000315"/>
    <property type="project" value="MGI"/>
</dbReference>
<dbReference type="CDD" id="cd10420">
    <property type="entry name" value="SH2_STAT5b"/>
    <property type="match status" value="1"/>
</dbReference>
<dbReference type="CDD" id="cd16855">
    <property type="entry name" value="STAT5_CCD"/>
    <property type="match status" value="1"/>
</dbReference>
<dbReference type="CDD" id="cd16849">
    <property type="entry name" value="STAT5_DBD"/>
    <property type="match status" value="1"/>
</dbReference>
<dbReference type="FunFam" id="1.10.532.10:FF:000002">
    <property type="entry name" value="Signal transducer and activator of transcription"/>
    <property type="match status" value="1"/>
</dbReference>
<dbReference type="FunFam" id="1.20.1050.20:FF:000002">
    <property type="entry name" value="Signal transducer and activator of transcription"/>
    <property type="match status" value="1"/>
</dbReference>
<dbReference type="FunFam" id="2.60.40.630:FF:000002">
    <property type="entry name" value="Signal transducer and activator of transcription"/>
    <property type="match status" value="1"/>
</dbReference>
<dbReference type="FunFam" id="3.30.505.10:FF:000025">
    <property type="entry name" value="Signal transducer and activator of transcription"/>
    <property type="match status" value="1"/>
</dbReference>
<dbReference type="FunFam" id="1.10.238.10:FF:000029">
    <property type="entry name" value="Signal transducer and transcription activator 6"/>
    <property type="match status" value="1"/>
</dbReference>
<dbReference type="Gene3D" id="1.10.238.10">
    <property type="entry name" value="EF-hand"/>
    <property type="match status" value="1"/>
</dbReference>
<dbReference type="Gene3D" id="3.30.505.10">
    <property type="entry name" value="SH2 domain"/>
    <property type="match status" value="1"/>
</dbReference>
<dbReference type="Gene3D" id="1.20.1050.20">
    <property type="entry name" value="STAT transcription factor, all-alpha domain"/>
    <property type="match status" value="1"/>
</dbReference>
<dbReference type="Gene3D" id="2.60.40.630">
    <property type="entry name" value="STAT transcription factor, DNA-binding domain"/>
    <property type="match status" value="1"/>
</dbReference>
<dbReference type="Gene3D" id="1.10.532.10">
    <property type="entry name" value="STAT transcription factor, N-terminal domain"/>
    <property type="match status" value="1"/>
</dbReference>
<dbReference type="InterPro" id="IPR008967">
    <property type="entry name" value="p53-like_TF_DNA-bd_sf"/>
</dbReference>
<dbReference type="InterPro" id="IPR000980">
    <property type="entry name" value="SH2"/>
</dbReference>
<dbReference type="InterPro" id="IPR036860">
    <property type="entry name" value="SH2_dom_sf"/>
</dbReference>
<dbReference type="InterPro" id="IPR001217">
    <property type="entry name" value="STAT"/>
</dbReference>
<dbReference type="InterPro" id="IPR046994">
    <property type="entry name" value="STAT5_CCD"/>
</dbReference>
<dbReference type="InterPro" id="IPR035858">
    <property type="entry name" value="STAT5a/5b_DBD"/>
</dbReference>
<dbReference type="InterPro" id="IPR035886">
    <property type="entry name" value="STAT5b_SH2"/>
</dbReference>
<dbReference type="InterPro" id="IPR048988">
    <property type="entry name" value="STAT_linker"/>
</dbReference>
<dbReference type="InterPro" id="IPR036535">
    <property type="entry name" value="STAT_N_sf"/>
</dbReference>
<dbReference type="InterPro" id="IPR013800">
    <property type="entry name" value="STAT_TF_alpha"/>
</dbReference>
<dbReference type="InterPro" id="IPR015988">
    <property type="entry name" value="STAT_TF_coiled-coil"/>
</dbReference>
<dbReference type="InterPro" id="IPR013801">
    <property type="entry name" value="STAT_TF_DNA-bd"/>
</dbReference>
<dbReference type="InterPro" id="IPR012345">
    <property type="entry name" value="STAT_TF_DNA-bd_N"/>
</dbReference>
<dbReference type="InterPro" id="IPR013799">
    <property type="entry name" value="STAT_TF_prot_interaction"/>
</dbReference>
<dbReference type="PANTHER" id="PTHR11801">
    <property type="entry name" value="SIGNAL TRANSDUCER AND ACTIVATOR OF TRANSCRIPTION"/>
    <property type="match status" value="1"/>
</dbReference>
<dbReference type="Pfam" id="PF00017">
    <property type="entry name" value="SH2"/>
    <property type="match status" value="1"/>
</dbReference>
<dbReference type="Pfam" id="PF01017">
    <property type="entry name" value="STAT_alpha"/>
    <property type="match status" value="1"/>
</dbReference>
<dbReference type="Pfam" id="PF02864">
    <property type="entry name" value="STAT_bind"/>
    <property type="match status" value="1"/>
</dbReference>
<dbReference type="Pfam" id="PF02865">
    <property type="entry name" value="STAT_int"/>
    <property type="match status" value="1"/>
</dbReference>
<dbReference type="Pfam" id="PF21354">
    <property type="entry name" value="STAT_linker"/>
    <property type="match status" value="1"/>
</dbReference>
<dbReference type="SMART" id="SM00252">
    <property type="entry name" value="SH2"/>
    <property type="match status" value="1"/>
</dbReference>
<dbReference type="SMART" id="SM00964">
    <property type="entry name" value="STAT_int"/>
    <property type="match status" value="1"/>
</dbReference>
<dbReference type="SUPFAM" id="SSF49417">
    <property type="entry name" value="p53-like transcription factors"/>
    <property type="match status" value="1"/>
</dbReference>
<dbReference type="SUPFAM" id="SSF55550">
    <property type="entry name" value="SH2 domain"/>
    <property type="match status" value="1"/>
</dbReference>
<dbReference type="SUPFAM" id="SSF47655">
    <property type="entry name" value="STAT"/>
    <property type="match status" value="1"/>
</dbReference>
<dbReference type="SUPFAM" id="SSF48092">
    <property type="entry name" value="Transcription factor STAT-4 N-domain"/>
    <property type="match status" value="1"/>
</dbReference>
<dbReference type="PROSITE" id="PS50001">
    <property type="entry name" value="SH2"/>
    <property type="match status" value="1"/>
</dbReference>
<accession>P42232</accession>
<accession>A2A5D5</accession>
<accession>Q541Q5</accession>
<accession>Q60804</accession>
<accession>Q8K3Q1</accession>
<accession>Q9JKM1</accession>
<accession>Q9R0X8</accession>
<reference key="1">
    <citation type="journal article" date="1995" name="EMBO J.">
        <title>Interleukin-3, granulocyte-macrophage colony stimulating factor and interleukin-5 transduce signals through two STAT5 homologs.</title>
        <authorList>
            <person name="Mui A.L.-F."/>
            <person name="Wakao H."/>
            <person name="O'Farrell A.-M."/>
            <person name="Harada N."/>
            <person name="Miyajima A."/>
        </authorList>
    </citation>
    <scope>NUCLEOTIDE SEQUENCE [MRNA]</scope>
    <source>
        <strain>C57BL/6 X A/J</strain>
        <tissue>Liver</tissue>
    </source>
</reference>
<reference key="2">
    <citation type="journal article" date="1995" name="Proc. Natl. Acad. Sci. U.S.A.">
        <title>Cloning and expression of Stat5 and an additional homologue (Stat5b) involved in prolactin signal transduction in mouse mammary tissue.</title>
        <authorList>
            <person name="Liu X."/>
            <person name="Robinson G.W."/>
            <person name="Gouilleux F."/>
            <person name="Groner B."/>
            <person name="Hennighausen L."/>
        </authorList>
    </citation>
    <scope>NUCLEOTIDE SEQUENCE [MRNA]</scope>
    <scope>FUNCTION</scope>
    <scope>TISSUE SPECIFICITY</scope>
    <scope>DEVELOPMENTAL STAGE</scope>
    <source>
        <strain>C57BL/6J</strain>
    </source>
</reference>
<reference key="3">
    <citation type="journal article" date="2001" name="Genomics">
        <title>Structure of the mouse Stat 3/5 locus: evolution from Drosophila to zebrafish to mouse.</title>
        <authorList>
            <person name="Miyoshi K."/>
            <person name="Cui Y."/>
            <person name="Riedlinger G."/>
            <person name="Robinson P."/>
            <person name="Lehoczky J."/>
            <person name="Zon L."/>
            <person name="Oka T."/>
            <person name="Dewar K."/>
            <person name="Hennighausen L."/>
        </authorList>
    </citation>
    <scope>NUCLEOTIDE SEQUENCE [GENOMIC DNA]</scope>
    <source>
        <strain>129</strain>
    </source>
</reference>
<reference key="4">
    <citation type="journal article" date="2004" name="J. Biol. Chem.">
        <title>A mutant Stat5b with weaker DNA binding affinity defines a key defective pathway in non-obese diabetic (NOD) mice.</title>
        <authorList>
            <person name="Davoodi-Semiromi A."/>
            <person name="Laloraya M."/>
            <person name="Kumar G.P."/>
            <person name="Purohit S."/>
            <person name="Jha R.K."/>
            <person name="She J.-X."/>
        </authorList>
    </citation>
    <scope>NUCLEOTIDE SEQUENCE [MRNA]</scope>
    <scope>VARIANT MET-327</scope>
    <source>
        <strain>BALB/cJ</strain>
        <strain>C3H/HeJ</strain>
        <strain>C57BL/6J</strain>
        <strain>CBA/J</strain>
        <strain>NOD</strain>
    </source>
</reference>
<reference key="5">
    <citation type="journal article" date="2005" name="Science">
        <title>The transcriptional landscape of the mammalian genome.</title>
        <authorList>
            <person name="Carninci P."/>
            <person name="Kasukawa T."/>
            <person name="Katayama S."/>
            <person name="Gough J."/>
            <person name="Frith M.C."/>
            <person name="Maeda N."/>
            <person name="Oyama R."/>
            <person name="Ravasi T."/>
            <person name="Lenhard B."/>
            <person name="Wells C."/>
            <person name="Kodzius R."/>
            <person name="Shimokawa K."/>
            <person name="Bajic V.B."/>
            <person name="Brenner S.E."/>
            <person name="Batalov S."/>
            <person name="Forrest A.R."/>
            <person name="Zavolan M."/>
            <person name="Davis M.J."/>
            <person name="Wilming L.G."/>
            <person name="Aidinis V."/>
            <person name="Allen J.E."/>
            <person name="Ambesi-Impiombato A."/>
            <person name="Apweiler R."/>
            <person name="Aturaliya R.N."/>
            <person name="Bailey T.L."/>
            <person name="Bansal M."/>
            <person name="Baxter L."/>
            <person name="Beisel K.W."/>
            <person name="Bersano T."/>
            <person name="Bono H."/>
            <person name="Chalk A.M."/>
            <person name="Chiu K.P."/>
            <person name="Choudhary V."/>
            <person name="Christoffels A."/>
            <person name="Clutterbuck D.R."/>
            <person name="Crowe M.L."/>
            <person name="Dalla E."/>
            <person name="Dalrymple B.P."/>
            <person name="de Bono B."/>
            <person name="Della Gatta G."/>
            <person name="di Bernardo D."/>
            <person name="Down T."/>
            <person name="Engstrom P."/>
            <person name="Fagiolini M."/>
            <person name="Faulkner G."/>
            <person name="Fletcher C.F."/>
            <person name="Fukushima T."/>
            <person name="Furuno M."/>
            <person name="Futaki S."/>
            <person name="Gariboldi M."/>
            <person name="Georgii-Hemming P."/>
            <person name="Gingeras T.R."/>
            <person name="Gojobori T."/>
            <person name="Green R.E."/>
            <person name="Gustincich S."/>
            <person name="Harbers M."/>
            <person name="Hayashi Y."/>
            <person name="Hensch T.K."/>
            <person name="Hirokawa N."/>
            <person name="Hill D."/>
            <person name="Huminiecki L."/>
            <person name="Iacono M."/>
            <person name="Ikeo K."/>
            <person name="Iwama A."/>
            <person name="Ishikawa T."/>
            <person name="Jakt M."/>
            <person name="Kanapin A."/>
            <person name="Katoh M."/>
            <person name="Kawasawa Y."/>
            <person name="Kelso J."/>
            <person name="Kitamura H."/>
            <person name="Kitano H."/>
            <person name="Kollias G."/>
            <person name="Krishnan S.P."/>
            <person name="Kruger A."/>
            <person name="Kummerfeld S.K."/>
            <person name="Kurochkin I.V."/>
            <person name="Lareau L.F."/>
            <person name="Lazarevic D."/>
            <person name="Lipovich L."/>
            <person name="Liu J."/>
            <person name="Liuni S."/>
            <person name="McWilliam S."/>
            <person name="Madan Babu M."/>
            <person name="Madera M."/>
            <person name="Marchionni L."/>
            <person name="Matsuda H."/>
            <person name="Matsuzawa S."/>
            <person name="Miki H."/>
            <person name="Mignone F."/>
            <person name="Miyake S."/>
            <person name="Morris K."/>
            <person name="Mottagui-Tabar S."/>
            <person name="Mulder N."/>
            <person name="Nakano N."/>
            <person name="Nakauchi H."/>
            <person name="Ng P."/>
            <person name="Nilsson R."/>
            <person name="Nishiguchi S."/>
            <person name="Nishikawa S."/>
            <person name="Nori F."/>
            <person name="Ohara O."/>
            <person name="Okazaki Y."/>
            <person name="Orlando V."/>
            <person name="Pang K.C."/>
            <person name="Pavan W.J."/>
            <person name="Pavesi G."/>
            <person name="Pesole G."/>
            <person name="Petrovsky N."/>
            <person name="Piazza S."/>
            <person name="Reed J."/>
            <person name="Reid J.F."/>
            <person name="Ring B.Z."/>
            <person name="Ringwald M."/>
            <person name="Rost B."/>
            <person name="Ruan Y."/>
            <person name="Salzberg S.L."/>
            <person name="Sandelin A."/>
            <person name="Schneider C."/>
            <person name="Schoenbach C."/>
            <person name="Sekiguchi K."/>
            <person name="Semple C.A."/>
            <person name="Seno S."/>
            <person name="Sessa L."/>
            <person name="Sheng Y."/>
            <person name="Shibata Y."/>
            <person name="Shimada H."/>
            <person name="Shimada K."/>
            <person name="Silva D."/>
            <person name="Sinclair B."/>
            <person name="Sperling S."/>
            <person name="Stupka E."/>
            <person name="Sugiura K."/>
            <person name="Sultana R."/>
            <person name="Takenaka Y."/>
            <person name="Taki K."/>
            <person name="Tammoja K."/>
            <person name="Tan S.L."/>
            <person name="Tang S."/>
            <person name="Taylor M.S."/>
            <person name="Tegner J."/>
            <person name="Teichmann S.A."/>
            <person name="Ueda H.R."/>
            <person name="van Nimwegen E."/>
            <person name="Verardo R."/>
            <person name="Wei C.L."/>
            <person name="Yagi K."/>
            <person name="Yamanishi H."/>
            <person name="Zabarovsky E."/>
            <person name="Zhu S."/>
            <person name="Zimmer A."/>
            <person name="Hide W."/>
            <person name="Bult C."/>
            <person name="Grimmond S.M."/>
            <person name="Teasdale R.D."/>
            <person name="Liu E.T."/>
            <person name="Brusic V."/>
            <person name="Quackenbush J."/>
            <person name="Wahlestedt C."/>
            <person name="Mattick J.S."/>
            <person name="Hume D.A."/>
            <person name="Kai C."/>
            <person name="Sasaki D."/>
            <person name="Tomaru Y."/>
            <person name="Fukuda S."/>
            <person name="Kanamori-Katayama M."/>
            <person name="Suzuki M."/>
            <person name="Aoki J."/>
            <person name="Arakawa T."/>
            <person name="Iida J."/>
            <person name="Imamura K."/>
            <person name="Itoh M."/>
            <person name="Kato T."/>
            <person name="Kawaji H."/>
            <person name="Kawagashira N."/>
            <person name="Kawashima T."/>
            <person name="Kojima M."/>
            <person name="Kondo S."/>
            <person name="Konno H."/>
            <person name="Nakano K."/>
            <person name="Ninomiya N."/>
            <person name="Nishio T."/>
            <person name="Okada M."/>
            <person name="Plessy C."/>
            <person name="Shibata K."/>
            <person name="Shiraki T."/>
            <person name="Suzuki S."/>
            <person name="Tagami M."/>
            <person name="Waki K."/>
            <person name="Watahiki A."/>
            <person name="Okamura-Oho Y."/>
            <person name="Suzuki H."/>
            <person name="Kawai J."/>
            <person name="Hayashizaki Y."/>
        </authorList>
    </citation>
    <scope>NUCLEOTIDE SEQUENCE [LARGE SCALE MRNA]</scope>
    <source>
        <strain>C57BL/6J</strain>
        <strain>NOD</strain>
        <tissue>Bone marrow</tissue>
        <tissue>Dendritic cell</tissue>
        <tissue>Thymus</tissue>
    </source>
</reference>
<reference key="6">
    <citation type="journal article" date="2009" name="PLoS Biol.">
        <title>Lineage-specific biology revealed by a finished genome assembly of the mouse.</title>
        <authorList>
            <person name="Church D.M."/>
            <person name="Goodstadt L."/>
            <person name="Hillier L.W."/>
            <person name="Zody M.C."/>
            <person name="Goldstein S."/>
            <person name="She X."/>
            <person name="Bult C.J."/>
            <person name="Agarwala R."/>
            <person name="Cherry J.L."/>
            <person name="DiCuccio M."/>
            <person name="Hlavina W."/>
            <person name="Kapustin Y."/>
            <person name="Meric P."/>
            <person name="Maglott D."/>
            <person name="Birtle Z."/>
            <person name="Marques A.C."/>
            <person name="Graves T."/>
            <person name="Zhou S."/>
            <person name="Teague B."/>
            <person name="Potamousis K."/>
            <person name="Churas C."/>
            <person name="Place M."/>
            <person name="Herschleb J."/>
            <person name="Runnheim R."/>
            <person name="Forrest D."/>
            <person name="Amos-Landgraf J."/>
            <person name="Schwartz D.C."/>
            <person name="Cheng Z."/>
            <person name="Lindblad-Toh K."/>
            <person name="Eichler E.E."/>
            <person name="Ponting C.P."/>
        </authorList>
    </citation>
    <scope>NUCLEOTIDE SEQUENCE [LARGE SCALE GENOMIC DNA]</scope>
    <source>
        <strain>C57BL/6J</strain>
    </source>
</reference>
<reference key="7">
    <citation type="journal article" date="2004" name="Genome Res.">
        <title>The status, quality, and expansion of the NIH full-length cDNA project: the Mammalian Gene Collection (MGC).</title>
        <authorList>
            <consortium name="The MGC Project Team"/>
        </authorList>
    </citation>
    <scope>NUCLEOTIDE SEQUENCE [LARGE SCALE MRNA]</scope>
    <source>
        <strain>FVB/N</strain>
        <tissue>Kidney</tissue>
    </source>
</reference>
<reference key="8">
    <citation type="journal article" date="2000" name="J. Mol. Evol.">
        <title>Molecular characterization of STAT5A- and STAT5B-encoding genes reveals extended intragenic sequence homogeneity in cattle and mouse and different degrees of divergent evolution of various domains.</title>
        <authorList>
            <person name="Seyfert H.-M."/>
            <person name="Pitra C."/>
            <person name="Meyer L."/>
            <person name="Brunner R.M."/>
            <person name="Wheeler T.T."/>
            <person name="Molenaar A."/>
            <person name="McCracken J.Y."/>
            <person name="Herrmann J."/>
            <person name="Thiesen H.-J."/>
            <person name="Schwerin M."/>
        </authorList>
    </citation>
    <scope>NUCLEOTIDE SEQUENCE [GENOMIC DNA] OF 185-389</scope>
</reference>
<reference key="9">
    <citation type="journal article" date="1997" name="Eur. J. Biochem.">
        <title>Identification of Stat 5B as a substrate of the insulin receptor.</title>
        <authorList>
            <person name="Sawka-Verhelle D."/>
            <person name="Filloux C."/>
            <person name="Tartare-Deckert S."/>
            <person name="Mothe I."/>
            <person name="Van Obberghen E."/>
        </authorList>
    </citation>
    <scope>INTERACTION WITH INSR</scope>
    <scope>MUTAGENESIS OF THR-684</scope>
</reference>
<reference key="10">
    <citation type="journal article" date="1998" name="Mol. Cell. Biol.">
        <title>Characterization of Stat5a and Stat5b homodimers and heterodimers and their association with the glucocortiocoid receptor in mammary cells.</title>
        <authorList>
            <person name="Cella N."/>
            <person name="Groner B."/>
            <person name="Hynes N.E."/>
        </authorList>
    </citation>
    <scope>INTERACTION WITH NR3C1</scope>
</reference>
<reference key="11">
    <citation type="journal article" date="2000" name="Blood">
        <title>Flt3 mutations from patients with acute myeloid leukemia induce transformation of 32D cells mediated by the Ras and STAT5 pathways.</title>
        <authorList>
            <person name="Mizuki M."/>
            <person name="Fenski R."/>
            <person name="Halfter H."/>
            <person name="Matsumura I."/>
            <person name="Schmidt R."/>
            <person name="Muller C."/>
            <person name="Gruning W."/>
            <person name="Kratz-Albers K."/>
            <person name="Serve S."/>
            <person name="Steur C."/>
            <person name="Buchner T."/>
            <person name="Kienast J."/>
            <person name="Kanakura Y."/>
            <person name="Berdel W.E."/>
            <person name="Serve H."/>
        </authorList>
    </citation>
    <scope>PHOSPHORYLATION IN RESPONSE TO FLT3 SIGNALING</scope>
</reference>
<reference key="12">
    <citation type="journal article" date="2002" name="Mol. Endocrinol.">
        <title>A nuclear protein tyrosine phosphatase TC-PTP is a potential negative regulator of the PRL-mediated signaling pathway: dephosphorylation and deactivation of signal transducer and activator of transcription 5a and 5b by TC-PTP in nucleus.</title>
        <authorList>
            <person name="Aoki N."/>
            <person name="Matsuda T."/>
        </authorList>
    </citation>
    <scope>RETRACTED PAPER</scope>
</reference>
<reference key="13">
    <citation type="journal article" date="2013" name="Mol. Endocrinol.">
        <title>Retraction.</title>
        <authorList>
            <person name="Aoki N."/>
            <person name="Matsuda T."/>
        </authorList>
    </citation>
    <scope>RETRACTION NOTICE OF PUBMED:11773439</scope>
    <scope>CAUTION</scope>
</reference>
<reference key="14">
    <citation type="journal article" date="2010" name="Cell">
        <title>A tissue-specific atlas of mouse protein phosphorylation and expression.</title>
        <authorList>
            <person name="Huttlin E.L."/>
            <person name="Jedrychowski M.P."/>
            <person name="Elias J.E."/>
            <person name="Goswami T."/>
            <person name="Rad R."/>
            <person name="Beausoleil S.A."/>
            <person name="Villen J."/>
            <person name="Haas W."/>
            <person name="Sowa M.E."/>
            <person name="Gygi S.P."/>
        </authorList>
    </citation>
    <scope>PHOSPHORYLATION [LARGE SCALE ANALYSIS] AT TYR-699</scope>
    <scope>IDENTIFICATION BY MASS SPECTROMETRY [LARGE SCALE ANALYSIS]</scope>
    <source>
        <tissue>Brown adipose tissue</tissue>
        <tissue>Heart</tissue>
        <tissue>Kidney</tissue>
        <tissue>Liver</tissue>
        <tissue>Lung</tissue>
        <tissue>Pancreas</tissue>
        <tissue>Spleen</tissue>
    </source>
</reference>
<reference key="15">
    <citation type="journal article" date="2010" name="Nucleic Acids Res.">
        <title>A novel role of CPEB3 in regulating EGFR gene transcription via association with Stat5b in neurons.</title>
        <authorList>
            <person name="Peng S.C."/>
            <person name="Lai Y.T."/>
            <person name="Huang H.Y."/>
            <person name="Huang H.D."/>
            <person name="Huang Y.S."/>
        </authorList>
    </citation>
    <scope>INTERACTION WITH CPEB3</scope>
    <scope>SUBCELLULAR LOCATION</scope>
</reference>
<reference key="16">
    <citation type="journal article" date="2011" name="J. Biol. Chem.">
        <title>Mechanisms of STAT protein activation by oncogenic KIT mutants in neoplastic mast cells.</title>
        <authorList>
            <person name="Chaix A."/>
            <person name="Lopez S."/>
            <person name="Voisset E."/>
            <person name="Gros L."/>
            <person name="Dubreuil P."/>
            <person name="De Sepulveda P."/>
        </authorList>
    </citation>
    <scope>PHOSPHORYLATION IN RESPONSE TO KIT SIGNALING</scope>
</reference>
<reference key="17">
    <citation type="journal article" date="2011" name="J. Biol. Chem.">
        <title>Protein-tyrosine phosphatase DEP-1 controls receptor tyrosine kinase FLT3 signaling.</title>
        <authorList>
            <person name="Arora D."/>
            <person name="Stopp S."/>
            <person name="Bohmer S.A."/>
            <person name="Schons J."/>
            <person name="Godfrey R."/>
            <person name="Masson K."/>
            <person name="Razumovskaya E."/>
            <person name="Ronnstrand L."/>
            <person name="Tanzer S."/>
            <person name="Bauer R."/>
            <person name="Bohmer F.D."/>
            <person name="Muller J.P."/>
        </authorList>
    </citation>
    <scope>PHOSPHORYLATION IN RESPONSE TO FLT3 SIGNALING</scope>
</reference>
<sequence>MAMWIQAQQLQGDALHQMQALYGQHFPIEVRHYLSQWIESQAWDSIDLDNPQENIKATQLLEGLVQELQKKAEHQVGEDGFLLKIKLGHYATQLQSTYDRCPMELVRCIRHILYNEQRLVREANNGSSPAGSLADAMSQKHLQINQTFEELRLITQDTENELKKLQQTQEYFIIQYQESLRIQAQFAQLGQLNPQERMSRETALQQKQVSLETWLQREAQTLQQYRVELAEKHQKTLQLLRKQQTIILDDELIQWKRRQQLAGNGGPPEGSLDVLQSWCEKLAEIIWQNRQQIRRAEHLCQQLPIPGPVEEMLAEVNATITDIISALVTSTFIIEKQPPQVLKTQTKFAATVRLLVGGKLNVHMNPPQVKATIISEQQAKSLLKNENTRNDYSGEILNNCCVMEYHQATGTLSAHFRNMSLKRIKRSDRRGAESVTEEKFTILFDSQFSVGGNELVFQVKTLSLPVVVIVHGSQDNNATATVLWDNAFAEPGRVPFAVPDKVLWPQLCEALNMKFKAEVQSNRGLTKENLVFLAQKLFNISSNHLEDYNSMSVSWSQFNRENLPGRNYTFWQWFDGVMEVLKKHLKPHWNDGAILGFVNKQQAHDLLINKPDGTFLLRFSDSEIGGITIAWKFDSQERMFWNLMPFTTRDFSIRSLADRLGDLNYLIYVFPDRPKDEVYSKYYTPVPCEPATAKAADGYVKPQIKQVVPEFANASTDAGSGATYMDQAPSPVVCPQAHYNMYPPNPDSVLDTDGDFDLEDTMDVARRVEELLGRPMDSQWIPHAQS</sequence>
<gene>
    <name type="primary">Stat5b</name>
</gene>
<comment type="function">
    <text evidence="9">Carries out a dual function: signal transduction and activation of transcription. Mediates cellular responses to the cytokine KITLG/SCF and other growth factors. Binds to the GAS element and activates PRL-induced transcription. Positively regulates hematopoietic/erythroid differentiation.</text>
</comment>
<comment type="subunit">
    <text evidence="2 6 10 11">Upon activation, forms a homodimer or a heterodimer with a related family member. Binds NR3C1 (PubMed:9528750). Interacts with NCOA1 (By similarity). Interacts with SOCS7 (By similarity). Interacts (via SH2 domain) with INSR (PubMed:9428692). Interacts with CPEB3; this inhibits STAT5B-mediated transcriptional activation (PubMed:20639532).</text>
</comment>
<comment type="interaction">
    <interactant intactId="EBI-617454">
        <id>P42232</id>
    </interactant>
    <interactant intactId="EBI-356767">
        <id>Q96EY1</id>
        <label>DNAJA3</label>
    </interactant>
    <organismsDiffer>true</organismsDiffer>
    <experiments>3</experiments>
</comment>
<comment type="interaction">
    <interactant intactId="EBI-617454">
        <id>P42232</id>
    </interactant>
    <interactant intactId="EBI-4322330">
        <id>Q96EY1-1</id>
        <label>DNAJA3</label>
    </interactant>
    <organismsDiffer>true</organismsDiffer>
    <experiments>2</experiments>
</comment>
<comment type="interaction">
    <interactant intactId="EBI-617454">
        <id>P42232</id>
    </interactant>
    <interactant intactId="EBI-3952284">
        <id>Q96EY1-2</id>
        <label>DNAJA3</label>
    </interactant>
    <organismsDiffer>true</organismsDiffer>
    <experiments>2</experiments>
</comment>
<comment type="interaction">
    <interactant intactId="EBI-617454">
        <id>P42232</id>
    </interactant>
    <interactant intactId="EBI-7526279">
        <id>P19941</id>
        <label>GHR</label>
    </interactant>
    <organismsDiffer>true</organismsDiffer>
    <experiments>6</experiments>
</comment>
<comment type="subcellular location">
    <subcellularLocation>
        <location evidence="6">Cytoplasm</location>
    </subcellularLocation>
    <subcellularLocation>
        <location evidence="6">Nucleus</location>
    </subcellularLocation>
    <text>Translocated into the nucleus in response to phosphorylation.</text>
</comment>
<comment type="tissue specificity">
    <text evidence="9">In the virgin, found in most tissues. Particularly abundant in muscle tissue of virgin and lactating females, and of males.</text>
</comment>
<comment type="developmental stage">
    <text evidence="9">Detected both in virgin mouse and after mammary gland involution. The level of STAT5A increases constantly during pregnancy, but decreases during lactation.</text>
</comment>
<comment type="PTM">
    <text evidence="2 4 7 8">Tyrosine phosphorylated in response to signaling via activated KIT, resulting in translocation to the nucleus. Tyrosine phosphorylated in response to signaling via activated FLT3; wild-type FLT3 results in much weaker phosphorylation than constitutively activated mutant FLT3. Alternatively, can be phosphorylated by JAK2 (By similarity). Phosphorylation at Tyr-699 by PTK6 or HCK leads to an increase of its transcriptional activity (By similarity).</text>
</comment>
<comment type="similarity">
    <text evidence="12">Belongs to the transcription factor STAT family.</text>
</comment>
<name>STA5B_MOUSE</name>
<evidence type="ECO:0000250" key="1">
    <source>
        <dbReference type="UniProtKB" id="P42229"/>
    </source>
</evidence>
<evidence type="ECO:0000250" key="2">
    <source>
        <dbReference type="UniProtKB" id="P51692"/>
    </source>
</evidence>
<evidence type="ECO:0000255" key="3">
    <source>
        <dbReference type="PROSITE-ProRule" id="PRU00191"/>
    </source>
</evidence>
<evidence type="ECO:0000269" key="4">
    <source>
    </source>
</evidence>
<evidence type="ECO:0000269" key="5">
    <source>
    </source>
</evidence>
<evidence type="ECO:0000269" key="6">
    <source>
    </source>
</evidence>
<evidence type="ECO:0000269" key="7">
    <source>
    </source>
</evidence>
<evidence type="ECO:0000269" key="8">
    <source>
    </source>
</evidence>
<evidence type="ECO:0000269" key="9">
    <source>
    </source>
</evidence>
<evidence type="ECO:0000269" key="10">
    <source>
    </source>
</evidence>
<evidence type="ECO:0000269" key="11">
    <source>
    </source>
</evidence>
<evidence type="ECO:0000305" key="12"/>
<evidence type="ECO:0007744" key="13">
    <source>
    </source>
</evidence>
<organism>
    <name type="scientific">Mus musculus</name>
    <name type="common">Mouse</name>
    <dbReference type="NCBI Taxonomy" id="10090"/>
    <lineage>
        <taxon>Eukaryota</taxon>
        <taxon>Metazoa</taxon>
        <taxon>Chordata</taxon>
        <taxon>Craniata</taxon>
        <taxon>Vertebrata</taxon>
        <taxon>Euteleostomi</taxon>
        <taxon>Mammalia</taxon>
        <taxon>Eutheria</taxon>
        <taxon>Euarchontoglires</taxon>
        <taxon>Glires</taxon>
        <taxon>Rodentia</taxon>
        <taxon>Myomorpha</taxon>
        <taxon>Muroidea</taxon>
        <taxon>Muridae</taxon>
        <taxon>Murinae</taxon>
        <taxon>Mus</taxon>
        <taxon>Mus</taxon>
    </lineage>
</organism>
<keyword id="KW-0010">Activator</keyword>
<keyword id="KW-0963">Cytoplasm</keyword>
<keyword id="KW-0238">DNA-binding</keyword>
<keyword id="KW-0539">Nucleus</keyword>
<keyword id="KW-0597">Phosphoprotein</keyword>
<keyword id="KW-1185">Reference proteome</keyword>
<keyword id="KW-0727">SH2 domain</keyword>
<keyword id="KW-0804">Transcription</keyword>
<keyword id="KW-0805">Transcription regulation</keyword>